<protein>
    <recommendedName>
        <fullName>Zinc finger CCCH domain-containing protein 14</fullName>
    </recommendedName>
</protein>
<proteinExistence type="evidence at transcript level"/>
<name>ZC3HE_DANRE</name>
<comment type="function">
    <text evidence="1">RNA-binding protein involved in the biogenesis of circular RNAs (circRNAs), which are produced by back-splicing circularization of pre-mRNAs. Acts by binding to both exon-intron boundary and 3'-UTR of pre-mRNAs to promote circRNA biogenesis through dimerization and the association with the spliceosome. Also binds the poly(A) tail of mRNAs; controlling poly(A) length.</text>
</comment>
<comment type="subunit">
    <text evidence="1">Homodimer; facilitating circular RNAs (circRNAs) formation.</text>
</comment>
<comment type="subcellular location">
    <subcellularLocation>
        <location evidence="1">Nucleus speckle</location>
    </subcellularLocation>
</comment>
<comment type="similarity">
    <text evidence="3">Belongs to the ZC3H14 family.</text>
</comment>
<organism>
    <name type="scientific">Danio rerio</name>
    <name type="common">Zebrafish</name>
    <name type="synonym">Brachydanio rerio</name>
    <dbReference type="NCBI Taxonomy" id="7955"/>
    <lineage>
        <taxon>Eukaryota</taxon>
        <taxon>Metazoa</taxon>
        <taxon>Chordata</taxon>
        <taxon>Craniata</taxon>
        <taxon>Vertebrata</taxon>
        <taxon>Euteleostomi</taxon>
        <taxon>Actinopterygii</taxon>
        <taxon>Neopterygii</taxon>
        <taxon>Teleostei</taxon>
        <taxon>Ostariophysi</taxon>
        <taxon>Cypriniformes</taxon>
        <taxon>Danionidae</taxon>
        <taxon>Danioninae</taxon>
        <taxon>Danio</taxon>
    </lineage>
</organism>
<dbReference type="EMBL" id="BX936455">
    <property type="protein sequence ID" value="CAH69025.1"/>
    <property type="molecule type" value="Genomic_DNA"/>
</dbReference>
<dbReference type="EMBL" id="BC116476">
    <property type="protein sequence ID" value="AAI16477.1"/>
    <property type="molecule type" value="mRNA"/>
</dbReference>
<dbReference type="RefSeq" id="NP_001020695.2">
    <property type="nucleotide sequence ID" value="NM_001025524.2"/>
</dbReference>
<dbReference type="FunCoup" id="Q5TYQ8">
    <property type="interactions" value="1543"/>
</dbReference>
<dbReference type="STRING" id="7955.ENSDARP00000060694"/>
<dbReference type="PaxDb" id="7955-ENSDARP00000060694"/>
<dbReference type="Ensembl" id="ENSDART00000060695">
    <property type="protein sequence ID" value="ENSDARP00000060694"/>
    <property type="gene ID" value="ENSDARG00000041402"/>
</dbReference>
<dbReference type="GeneID" id="562846"/>
<dbReference type="KEGG" id="dre:562846"/>
<dbReference type="AGR" id="ZFIN:ZDB-GENE-041014-257"/>
<dbReference type="CTD" id="79882"/>
<dbReference type="ZFIN" id="ZDB-GENE-041014-257">
    <property type="gene designation" value="zc3h14"/>
</dbReference>
<dbReference type="eggNOG" id="KOG3702">
    <property type="taxonomic scope" value="Eukaryota"/>
</dbReference>
<dbReference type="HOGENOM" id="CLU_022605_0_0_1"/>
<dbReference type="InParanoid" id="Q5TYQ8"/>
<dbReference type="OMA" id="CPYTHVS"/>
<dbReference type="OrthoDB" id="5589010at2759"/>
<dbReference type="PhylomeDB" id="Q5TYQ8"/>
<dbReference type="TreeFam" id="TF329509"/>
<dbReference type="PRO" id="PR:Q5TYQ8"/>
<dbReference type="Proteomes" id="UP000000437">
    <property type="component" value="Alternate scaffold 20"/>
</dbReference>
<dbReference type="Proteomes" id="UP000000437">
    <property type="component" value="Chromosome 20"/>
</dbReference>
<dbReference type="Bgee" id="ENSDARG00000041402">
    <property type="expression patterns" value="Expressed in testis and 21 other cell types or tissues"/>
</dbReference>
<dbReference type="ExpressionAtlas" id="Q5TYQ8">
    <property type="expression patterns" value="baseline"/>
</dbReference>
<dbReference type="GO" id="GO:0005737">
    <property type="term" value="C:cytoplasm"/>
    <property type="evidence" value="ECO:0000318"/>
    <property type="project" value="GO_Central"/>
</dbReference>
<dbReference type="GO" id="GO:0016607">
    <property type="term" value="C:nuclear speck"/>
    <property type="evidence" value="ECO:0000250"/>
    <property type="project" value="UniProtKB"/>
</dbReference>
<dbReference type="GO" id="GO:0005634">
    <property type="term" value="C:nucleus"/>
    <property type="evidence" value="ECO:0000250"/>
    <property type="project" value="UniProtKB"/>
</dbReference>
<dbReference type="GO" id="GO:0008143">
    <property type="term" value="F:poly(A) binding"/>
    <property type="evidence" value="ECO:0000250"/>
    <property type="project" value="UniProtKB"/>
</dbReference>
<dbReference type="GO" id="GO:0036002">
    <property type="term" value="F:pre-mRNA binding"/>
    <property type="evidence" value="ECO:0000250"/>
    <property type="project" value="UniProtKB"/>
</dbReference>
<dbReference type="GO" id="GO:0008270">
    <property type="term" value="F:zinc ion binding"/>
    <property type="evidence" value="ECO:0007669"/>
    <property type="project" value="UniProtKB-KW"/>
</dbReference>
<dbReference type="GO" id="GO:0048255">
    <property type="term" value="P:mRNA stabilization"/>
    <property type="evidence" value="ECO:0000250"/>
    <property type="project" value="UniProtKB"/>
</dbReference>
<dbReference type="GO" id="GO:0043488">
    <property type="term" value="P:regulation of mRNA stability"/>
    <property type="evidence" value="ECO:0000318"/>
    <property type="project" value="GO_Central"/>
</dbReference>
<dbReference type="FunFam" id="4.10.1000.30:FF:000001">
    <property type="entry name" value="Zinc finger CCCH domain-containing protein 14"/>
    <property type="match status" value="1"/>
</dbReference>
<dbReference type="FunFam" id="4.10.1000.40:FF:000006">
    <property type="entry name" value="Zinc finger CCCH domain-containing protein 14"/>
    <property type="match status" value="1"/>
</dbReference>
<dbReference type="FunFam" id="1.20.1390.10:FF:000006">
    <property type="entry name" value="zinc finger CCCH domain-containing protein 14"/>
    <property type="match status" value="1"/>
</dbReference>
<dbReference type="Gene3D" id="4.10.1000.30">
    <property type="match status" value="1"/>
</dbReference>
<dbReference type="Gene3D" id="4.10.1000.40">
    <property type="match status" value="1"/>
</dbReference>
<dbReference type="Gene3D" id="1.20.1390.10">
    <property type="entry name" value="PWI domain"/>
    <property type="match status" value="1"/>
</dbReference>
<dbReference type="InterPro" id="IPR040366">
    <property type="entry name" value="Nab2/ZC3H14"/>
</dbReference>
<dbReference type="PANTHER" id="PTHR14738">
    <property type="entry name" value="ZINC FINGER CCCH DOMAIN-CONTAINING PROTEIN 14"/>
    <property type="match status" value="1"/>
</dbReference>
<dbReference type="PANTHER" id="PTHR14738:SF29">
    <property type="entry name" value="ZINC FINGER CCCH DOMAIN-CONTAINING PROTEIN 14"/>
    <property type="match status" value="1"/>
</dbReference>
<dbReference type="Pfam" id="PF14608">
    <property type="entry name" value="zf-CCCH_2"/>
    <property type="match status" value="5"/>
</dbReference>
<keyword id="KW-0479">Metal-binding</keyword>
<keyword id="KW-0539">Nucleus</keyword>
<keyword id="KW-1185">Reference proteome</keyword>
<keyword id="KW-0677">Repeat</keyword>
<keyword id="KW-0694">RNA-binding</keyword>
<keyword id="KW-0862">Zinc</keyword>
<keyword id="KW-0863">Zinc-finger</keyword>
<evidence type="ECO:0000250" key="1">
    <source>
        <dbReference type="UniProtKB" id="Q6PJT7"/>
    </source>
</evidence>
<evidence type="ECO:0000256" key="2">
    <source>
        <dbReference type="SAM" id="MobiDB-lite"/>
    </source>
</evidence>
<evidence type="ECO:0000305" key="3"/>
<sequence length="669" mass="74585">MEIGTEISKKIRTAIKGKLQEFGAYVDEELPDYIMVMVANKKNPQQMADDLSLFLGNNTIKFTVWLHGVLEKLRSVAVEPPSLGPSVVHSETSIPAENSRRGAEPRALAVSSSRSDKAEGRVSSSAHENRASKRGSSERPSRLTSAVKPLMEASAEAVIDIKPDLDDDLISYDPVEHSLTSGHSQALYSRSTAERQRPAVESSRRTADTYRSSDISRGQDRSERGYRSSAESSRDLSRKRKAPVASSVVRVHRGHERGLEIEDLEEEEEDEDYGLASKVSLPSKPERKPTLPPAKQANKNLILKAISEAQESINKTTSQYTVPQRQTVPVAPRTRSASDEMSNAAIRLVQEHLHALTPQDTLHNTQSRGLASRLQLEVPEEDSREPHEYELQVLEAARLKALDTRSFIMRQPEVEQPPPIRSRLSAVNQNENAPTTSRMVQARERAEAVGGSSPKFIVTLDGVPSPLANRTDQEMETEDELNTTADLPENNNNNNTTTTTSKPAVHLRLGADLRNACDDEVEEMDIEAVQAKRQKLPERCKFWPTCKSGDECLYHHPNTQCKVFPNCKFADKCLFIHPNCKFDAKCTKADCPFTHVSRRLNSNPTRAAPALTSTVCRFFPECKKVDCPFYHPKPCRFATQCKRADCTFYHPAVAVPPRSALKWTKTQSS</sequence>
<accession>Q5TYQ8</accession>
<accession>Q1JQ57</accession>
<reference key="1">
    <citation type="journal article" date="2013" name="Nature">
        <title>The zebrafish reference genome sequence and its relationship to the human genome.</title>
        <authorList>
            <person name="Howe K."/>
            <person name="Clark M.D."/>
            <person name="Torroja C.F."/>
            <person name="Torrance J."/>
            <person name="Berthelot C."/>
            <person name="Muffato M."/>
            <person name="Collins J.E."/>
            <person name="Humphray S."/>
            <person name="McLaren K."/>
            <person name="Matthews L."/>
            <person name="McLaren S."/>
            <person name="Sealy I."/>
            <person name="Caccamo M."/>
            <person name="Churcher C."/>
            <person name="Scott C."/>
            <person name="Barrett J.C."/>
            <person name="Koch R."/>
            <person name="Rauch G.J."/>
            <person name="White S."/>
            <person name="Chow W."/>
            <person name="Kilian B."/>
            <person name="Quintais L.T."/>
            <person name="Guerra-Assuncao J.A."/>
            <person name="Zhou Y."/>
            <person name="Gu Y."/>
            <person name="Yen J."/>
            <person name="Vogel J.H."/>
            <person name="Eyre T."/>
            <person name="Redmond S."/>
            <person name="Banerjee R."/>
            <person name="Chi J."/>
            <person name="Fu B."/>
            <person name="Langley E."/>
            <person name="Maguire S.F."/>
            <person name="Laird G.K."/>
            <person name="Lloyd D."/>
            <person name="Kenyon E."/>
            <person name="Donaldson S."/>
            <person name="Sehra H."/>
            <person name="Almeida-King J."/>
            <person name="Loveland J."/>
            <person name="Trevanion S."/>
            <person name="Jones M."/>
            <person name="Quail M."/>
            <person name="Willey D."/>
            <person name="Hunt A."/>
            <person name="Burton J."/>
            <person name="Sims S."/>
            <person name="McLay K."/>
            <person name="Plumb B."/>
            <person name="Davis J."/>
            <person name="Clee C."/>
            <person name="Oliver K."/>
            <person name="Clark R."/>
            <person name="Riddle C."/>
            <person name="Elliot D."/>
            <person name="Threadgold G."/>
            <person name="Harden G."/>
            <person name="Ware D."/>
            <person name="Begum S."/>
            <person name="Mortimore B."/>
            <person name="Kerry G."/>
            <person name="Heath P."/>
            <person name="Phillimore B."/>
            <person name="Tracey A."/>
            <person name="Corby N."/>
            <person name="Dunn M."/>
            <person name="Johnson C."/>
            <person name="Wood J."/>
            <person name="Clark S."/>
            <person name="Pelan S."/>
            <person name="Griffiths G."/>
            <person name="Smith M."/>
            <person name="Glithero R."/>
            <person name="Howden P."/>
            <person name="Barker N."/>
            <person name="Lloyd C."/>
            <person name="Stevens C."/>
            <person name="Harley J."/>
            <person name="Holt K."/>
            <person name="Panagiotidis G."/>
            <person name="Lovell J."/>
            <person name="Beasley H."/>
            <person name="Henderson C."/>
            <person name="Gordon D."/>
            <person name="Auger K."/>
            <person name="Wright D."/>
            <person name="Collins J."/>
            <person name="Raisen C."/>
            <person name="Dyer L."/>
            <person name="Leung K."/>
            <person name="Robertson L."/>
            <person name="Ambridge K."/>
            <person name="Leongamornlert D."/>
            <person name="McGuire S."/>
            <person name="Gilderthorp R."/>
            <person name="Griffiths C."/>
            <person name="Manthravadi D."/>
            <person name="Nichol S."/>
            <person name="Barker G."/>
            <person name="Whitehead S."/>
            <person name="Kay M."/>
            <person name="Brown J."/>
            <person name="Murnane C."/>
            <person name="Gray E."/>
            <person name="Humphries M."/>
            <person name="Sycamore N."/>
            <person name="Barker D."/>
            <person name="Saunders D."/>
            <person name="Wallis J."/>
            <person name="Babbage A."/>
            <person name="Hammond S."/>
            <person name="Mashreghi-Mohammadi M."/>
            <person name="Barr L."/>
            <person name="Martin S."/>
            <person name="Wray P."/>
            <person name="Ellington A."/>
            <person name="Matthews N."/>
            <person name="Ellwood M."/>
            <person name="Woodmansey R."/>
            <person name="Clark G."/>
            <person name="Cooper J."/>
            <person name="Tromans A."/>
            <person name="Grafham D."/>
            <person name="Skuce C."/>
            <person name="Pandian R."/>
            <person name="Andrews R."/>
            <person name="Harrison E."/>
            <person name="Kimberley A."/>
            <person name="Garnett J."/>
            <person name="Fosker N."/>
            <person name="Hall R."/>
            <person name="Garner P."/>
            <person name="Kelly D."/>
            <person name="Bird C."/>
            <person name="Palmer S."/>
            <person name="Gehring I."/>
            <person name="Berger A."/>
            <person name="Dooley C.M."/>
            <person name="Ersan-Urun Z."/>
            <person name="Eser C."/>
            <person name="Geiger H."/>
            <person name="Geisler M."/>
            <person name="Karotki L."/>
            <person name="Kirn A."/>
            <person name="Konantz J."/>
            <person name="Konantz M."/>
            <person name="Oberlander M."/>
            <person name="Rudolph-Geiger S."/>
            <person name="Teucke M."/>
            <person name="Lanz C."/>
            <person name="Raddatz G."/>
            <person name="Osoegawa K."/>
            <person name="Zhu B."/>
            <person name="Rapp A."/>
            <person name="Widaa S."/>
            <person name="Langford C."/>
            <person name="Yang F."/>
            <person name="Schuster S.C."/>
            <person name="Carter N.P."/>
            <person name="Harrow J."/>
            <person name="Ning Z."/>
            <person name="Herrero J."/>
            <person name="Searle S.M."/>
            <person name="Enright A."/>
            <person name="Geisler R."/>
            <person name="Plasterk R.H."/>
            <person name="Lee C."/>
            <person name="Westerfield M."/>
            <person name="de Jong P.J."/>
            <person name="Zon L.I."/>
            <person name="Postlethwait J.H."/>
            <person name="Nusslein-Volhard C."/>
            <person name="Hubbard T.J."/>
            <person name="Roest Crollius H."/>
            <person name="Rogers J."/>
            <person name="Stemple D.L."/>
        </authorList>
    </citation>
    <scope>NUCLEOTIDE SEQUENCE [LARGE SCALE GENOMIC DNA]</scope>
    <source>
        <strain>Tuebingen</strain>
    </source>
</reference>
<reference key="2">
    <citation type="submission" date="2006-05" db="EMBL/GenBank/DDBJ databases">
        <authorList>
            <consortium name="NIH - Zebrafish Gene Collection (ZGC) project"/>
        </authorList>
    </citation>
    <scope>NUCLEOTIDE SEQUENCE [LARGE SCALE MRNA]</scope>
    <source>
        <tissue>Skin</tissue>
    </source>
</reference>
<feature type="chain" id="PRO_0000331316" description="Zinc finger CCCH domain-containing protein 14">
    <location>
        <begin position="1"/>
        <end position="669"/>
    </location>
</feature>
<feature type="zinc finger region" description="C3H1-type 1">
    <location>
        <begin position="535"/>
        <end position="558"/>
    </location>
</feature>
<feature type="zinc finger region" description="C3H1-type 2">
    <location>
        <begin position="559"/>
        <end position="579"/>
    </location>
</feature>
<feature type="zinc finger region" description="C3H1-type 3">
    <location>
        <begin position="580"/>
        <end position="595"/>
    </location>
</feature>
<feature type="zinc finger region" description="C3H1-type 4">
    <location>
        <begin position="616"/>
        <end position="633"/>
    </location>
</feature>
<feature type="zinc finger region" description="C3H1-type 5">
    <location>
        <begin position="635"/>
        <end position="652"/>
    </location>
</feature>
<feature type="region of interest" description="Disordered" evidence="2">
    <location>
        <begin position="81"/>
        <end position="145"/>
    </location>
</feature>
<feature type="region of interest" description="Disordered" evidence="2">
    <location>
        <begin position="175"/>
        <end position="298"/>
    </location>
</feature>
<feature type="region of interest" description="Disordered" evidence="2">
    <location>
        <begin position="316"/>
        <end position="337"/>
    </location>
</feature>
<feature type="region of interest" description="Disordered" evidence="2">
    <location>
        <begin position="460"/>
        <end position="504"/>
    </location>
</feature>
<feature type="compositionally biased region" description="Basic and acidic residues" evidence="2">
    <location>
        <begin position="127"/>
        <end position="141"/>
    </location>
</feature>
<feature type="compositionally biased region" description="Polar residues" evidence="2">
    <location>
        <begin position="178"/>
        <end position="191"/>
    </location>
</feature>
<feature type="compositionally biased region" description="Basic and acidic residues" evidence="2">
    <location>
        <begin position="192"/>
        <end position="208"/>
    </location>
</feature>
<feature type="compositionally biased region" description="Basic and acidic residues" evidence="2">
    <location>
        <begin position="217"/>
        <end position="236"/>
    </location>
</feature>
<feature type="compositionally biased region" description="Acidic residues" evidence="2">
    <location>
        <begin position="261"/>
        <end position="273"/>
    </location>
</feature>
<feature type="compositionally biased region" description="Polar residues" evidence="2">
    <location>
        <begin position="316"/>
        <end position="327"/>
    </location>
</feature>
<feature type="compositionally biased region" description="Low complexity" evidence="2">
    <location>
        <begin position="490"/>
        <end position="500"/>
    </location>
</feature>
<feature type="sequence conflict" description="In Ref. 2; AAI16477." evidence="3" ref="2">
    <original>G</original>
    <variation>R</variation>
    <location>
        <position position="17"/>
    </location>
</feature>
<feature type="sequence conflict" description="In Ref. 2; AAI16477." evidence="3" ref="2">
    <original>L</original>
    <variation>I</variation>
    <location>
        <position position="108"/>
    </location>
</feature>
<feature type="sequence conflict" description="In Ref. 2; AAI16477." evidence="3" ref="2">
    <original>R</original>
    <variation>Q</variation>
    <location>
        <position position="205"/>
    </location>
</feature>
<feature type="sequence conflict" description="In Ref. 2; AAI16477." evidence="3" ref="2">
    <original>V</original>
    <variation>I</variation>
    <location>
        <position position="505"/>
    </location>
</feature>
<feature type="sequence conflict" description="In Ref. 2; AAI16477." evidence="3" ref="2">
    <original>L</original>
    <variation>F</variation>
    <location>
        <position position="513"/>
    </location>
</feature>
<feature type="sequence conflict" description="In Ref. 2; AAI16477." evidence="3" ref="2">
    <original>I</original>
    <variation>V</variation>
    <location>
        <position position="526"/>
    </location>
</feature>
<feature type="sequence conflict" description="In Ref. 2; AAI16477." evidence="3" ref="2">
    <original>C</original>
    <variation>S</variation>
    <location>
        <position position="591"/>
    </location>
</feature>
<feature type="sequence conflict" description="In Ref. 2; AAI16477." evidence="3" ref="2">
    <original>E</original>
    <variation>G</variation>
    <location>
        <position position="621"/>
    </location>
</feature>
<gene>
    <name type="primary">zc3h14</name>
    <name type="ORF">si:dkey-199i12.4</name>
    <name type="ORF">zgc:136266</name>
</gene>